<feature type="chain" id="PRO_0000088570" description="Photosystem I P700 chlorophyll a apoprotein A1">
    <location>
        <begin position="1"/>
        <end position="750"/>
    </location>
</feature>
<feature type="transmembrane region" description="Helical; Name=I" evidence="1">
    <location>
        <begin position="70"/>
        <end position="93"/>
    </location>
</feature>
<feature type="transmembrane region" description="Helical; Name=II" evidence="1">
    <location>
        <begin position="156"/>
        <end position="179"/>
    </location>
</feature>
<feature type="transmembrane region" description="Helical; Name=III" evidence="1">
    <location>
        <begin position="195"/>
        <end position="219"/>
    </location>
</feature>
<feature type="transmembrane region" description="Helical; Name=IV" evidence="1">
    <location>
        <begin position="291"/>
        <end position="309"/>
    </location>
</feature>
<feature type="transmembrane region" description="Helical; Name=V" evidence="1">
    <location>
        <begin position="346"/>
        <end position="369"/>
    </location>
</feature>
<feature type="transmembrane region" description="Helical; Name=VI" evidence="1">
    <location>
        <begin position="385"/>
        <end position="411"/>
    </location>
</feature>
<feature type="transmembrane region" description="Helical; Name=VII" evidence="1">
    <location>
        <begin position="433"/>
        <end position="455"/>
    </location>
</feature>
<feature type="transmembrane region" description="Helical; Name=VIII" evidence="1">
    <location>
        <begin position="531"/>
        <end position="549"/>
    </location>
</feature>
<feature type="transmembrane region" description="Helical; Name=IX" evidence="1">
    <location>
        <begin position="589"/>
        <end position="610"/>
    </location>
</feature>
<feature type="transmembrane region" description="Helical; Name=X" evidence="1">
    <location>
        <begin position="664"/>
        <end position="686"/>
    </location>
</feature>
<feature type="transmembrane region" description="Helical; Name=XI" evidence="1">
    <location>
        <begin position="724"/>
        <end position="744"/>
    </location>
</feature>
<feature type="binding site" evidence="1">
    <location>
        <position position="573"/>
    </location>
    <ligand>
        <name>[4Fe-4S] cluster</name>
        <dbReference type="ChEBI" id="CHEBI:49883"/>
        <note>ligand shared between dimeric partners</note>
    </ligand>
</feature>
<feature type="binding site" evidence="1">
    <location>
        <position position="582"/>
    </location>
    <ligand>
        <name>[4Fe-4S] cluster</name>
        <dbReference type="ChEBI" id="CHEBI:49883"/>
        <note>ligand shared between dimeric partners</note>
    </ligand>
</feature>
<feature type="binding site" description="axial binding residue" evidence="1">
    <location>
        <position position="675"/>
    </location>
    <ligand>
        <name>chlorophyll a'</name>
        <dbReference type="ChEBI" id="CHEBI:189419"/>
        <label>A1</label>
    </ligand>
    <ligandPart>
        <name>Mg</name>
        <dbReference type="ChEBI" id="CHEBI:25107"/>
    </ligandPart>
</feature>
<feature type="binding site" description="axial binding residue" evidence="1">
    <location>
        <position position="683"/>
    </location>
    <ligand>
        <name>chlorophyll a</name>
        <dbReference type="ChEBI" id="CHEBI:58416"/>
        <label>A3</label>
    </ligand>
    <ligandPart>
        <name>Mg</name>
        <dbReference type="ChEBI" id="CHEBI:25107"/>
    </ligandPart>
</feature>
<feature type="binding site" evidence="1">
    <location>
        <position position="691"/>
    </location>
    <ligand>
        <name>chlorophyll a</name>
        <dbReference type="ChEBI" id="CHEBI:58416"/>
        <label>A3</label>
    </ligand>
</feature>
<feature type="binding site" evidence="1">
    <location>
        <position position="692"/>
    </location>
    <ligand>
        <name>phylloquinone</name>
        <dbReference type="ChEBI" id="CHEBI:18067"/>
        <label>A</label>
    </ligand>
</feature>
<protein>
    <recommendedName>
        <fullName evidence="1">Photosystem I P700 chlorophyll a apoprotein A1</fullName>
        <ecNumber evidence="1">1.97.1.12</ecNumber>
    </recommendedName>
    <alternativeName>
        <fullName evidence="1">PSI-A</fullName>
    </alternativeName>
    <alternativeName>
        <fullName evidence="1">PsaA</fullName>
    </alternativeName>
</protein>
<name>PSAA_PINKO</name>
<keyword id="KW-0004">4Fe-4S</keyword>
<keyword id="KW-0148">Chlorophyll</keyword>
<keyword id="KW-0150">Chloroplast</keyword>
<keyword id="KW-0157">Chromophore</keyword>
<keyword id="KW-0249">Electron transport</keyword>
<keyword id="KW-0408">Iron</keyword>
<keyword id="KW-0411">Iron-sulfur</keyword>
<keyword id="KW-0460">Magnesium</keyword>
<keyword id="KW-0472">Membrane</keyword>
<keyword id="KW-0479">Metal-binding</keyword>
<keyword id="KW-0560">Oxidoreductase</keyword>
<keyword id="KW-0602">Photosynthesis</keyword>
<keyword id="KW-0603">Photosystem I</keyword>
<keyword id="KW-0934">Plastid</keyword>
<keyword id="KW-0793">Thylakoid</keyword>
<keyword id="KW-0812">Transmembrane</keyword>
<keyword id="KW-1133">Transmembrane helix</keyword>
<keyword id="KW-0813">Transport</keyword>
<accession>Q85WX3</accession>
<reference key="1">
    <citation type="submission" date="2003-02" db="EMBL/GenBank/DDBJ databases">
        <title>Complete nucleotide sequence of Pinus koraiensis.</title>
        <authorList>
            <person name="Noh E.W."/>
            <person name="Lee J.S."/>
            <person name="Choi Y.I."/>
            <person name="Han M.S."/>
            <person name="Yi Y.S."/>
            <person name="Han S.U."/>
        </authorList>
    </citation>
    <scope>NUCLEOTIDE SEQUENCE [LARGE SCALE GENOMIC DNA]</scope>
    <source>
        <strain>KangWon16</strain>
    </source>
</reference>
<comment type="function">
    <text>PsaA and PsaB bind P700, the primary electron donor of photosystem I (PSI), as well as the electron acceptors A0, A1 and FX. PSI is a plastocyanin-ferredoxin oxidoreductase, converting photonic excitation into a charge separation, which transfers an electron from the donor P700 chlorophyll pair to the spectroscopically characterized acceptors A0, A1, FX, FA and FB in turn. Oxidized P700 is reduced on the lumenal side of the thylakoid membrane by plastocyanin.</text>
</comment>
<comment type="catalytic activity">
    <reaction evidence="1">
        <text>reduced [plastocyanin] + hnu + oxidized [2Fe-2S]-[ferredoxin] = oxidized [plastocyanin] + reduced [2Fe-2S]-[ferredoxin]</text>
        <dbReference type="Rhea" id="RHEA:30407"/>
        <dbReference type="Rhea" id="RHEA-COMP:10000"/>
        <dbReference type="Rhea" id="RHEA-COMP:10001"/>
        <dbReference type="Rhea" id="RHEA-COMP:10039"/>
        <dbReference type="Rhea" id="RHEA-COMP:10040"/>
        <dbReference type="ChEBI" id="CHEBI:29036"/>
        <dbReference type="ChEBI" id="CHEBI:30212"/>
        <dbReference type="ChEBI" id="CHEBI:33737"/>
        <dbReference type="ChEBI" id="CHEBI:33738"/>
        <dbReference type="ChEBI" id="CHEBI:49552"/>
        <dbReference type="EC" id="1.97.1.12"/>
    </reaction>
</comment>
<comment type="cofactor">
    <text evidence="1">P700 is a chlorophyll a/chlorophyll a' dimer, A0 is one or more chlorophyll a, A1 is one or both phylloquinones and FX is a shared 4Fe-4S iron-sulfur center.</text>
</comment>
<comment type="subunit">
    <text evidence="1">The PsaA/B heterodimer binds the P700 chlorophyll special pair and subsequent electron acceptors. PSI consists of a core antenna complex that captures photons, and an electron transfer chain that converts photonic excitation into a charge separation. The eukaryotic PSI reaction center is composed of at least 11 subunits.</text>
</comment>
<comment type="subcellular location">
    <subcellularLocation>
        <location>Plastid</location>
        <location>Chloroplast thylakoid membrane</location>
        <topology>Multi-pass membrane protein</topology>
    </subcellularLocation>
</comment>
<comment type="similarity">
    <text evidence="1">Belongs to the PsaA/PsaB family.</text>
</comment>
<proteinExistence type="inferred from homology"/>
<geneLocation type="chloroplast"/>
<evidence type="ECO:0000255" key="1">
    <source>
        <dbReference type="HAMAP-Rule" id="MF_00458"/>
    </source>
</evidence>
<organism>
    <name type="scientific">Pinus koraiensis</name>
    <name type="common">Korean pine</name>
    <dbReference type="NCBI Taxonomy" id="88728"/>
    <lineage>
        <taxon>Eukaryota</taxon>
        <taxon>Viridiplantae</taxon>
        <taxon>Streptophyta</taxon>
        <taxon>Embryophyta</taxon>
        <taxon>Tracheophyta</taxon>
        <taxon>Spermatophyta</taxon>
        <taxon>Pinopsida</taxon>
        <taxon>Pinidae</taxon>
        <taxon>Conifers I</taxon>
        <taxon>Pinales</taxon>
        <taxon>Pinaceae</taxon>
        <taxon>Pinus</taxon>
        <taxon>Pinus subgen. Strobus</taxon>
    </lineage>
</organism>
<dbReference type="EC" id="1.97.1.12" evidence="1"/>
<dbReference type="EMBL" id="AY228468">
    <property type="protein sequence ID" value="AAO74096.1"/>
    <property type="molecule type" value="Genomic_DNA"/>
</dbReference>
<dbReference type="RefSeq" id="NP_817251.1">
    <property type="nucleotide sequence ID" value="NC_004677.2"/>
</dbReference>
<dbReference type="SMR" id="Q85WX3"/>
<dbReference type="GeneID" id="806941"/>
<dbReference type="GO" id="GO:0009535">
    <property type="term" value="C:chloroplast thylakoid membrane"/>
    <property type="evidence" value="ECO:0007669"/>
    <property type="project" value="UniProtKB-SubCell"/>
</dbReference>
<dbReference type="GO" id="GO:0009522">
    <property type="term" value="C:photosystem I"/>
    <property type="evidence" value="ECO:0007669"/>
    <property type="project" value="UniProtKB-KW"/>
</dbReference>
<dbReference type="GO" id="GO:0051539">
    <property type="term" value="F:4 iron, 4 sulfur cluster binding"/>
    <property type="evidence" value="ECO:0007669"/>
    <property type="project" value="UniProtKB-KW"/>
</dbReference>
<dbReference type="GO" id="GO:0016168">
    <property type="term" value="F:chlorophyll binding"/>
    <property type="evidence" value="ECO:0007669"/>
    <property type="project" value="UniProtKB-KW"/>
</dbReference>
<dbReference type="GO" id="GO:0009055">
    <property type="term" value="F:electron transfer activity"/>
    <property type="evidence" value="ECO:0007669"/>
    <property type="project" value="UniProtKB-UniRule"/>
</dbReference>
<dbReference type="GO" id="GO:0000287">
    <property type="term" value="F:magnesium ion binding"/>
    <property type="evidence" value="ECO:0007669"/>
    <property type="project" value="UniProtKB-UniRule"/>
</dbReference>
<dbReference type="GO" id="GO:0016491">
    <property type="term" value="F:oxidoreductase activity"/>
    <property type="evidence" value="ECO:0007669"/>
    <property type="project" value="UniProtKB-KW"/>
</dbReference>
<dbReference type="GO" id="GO:0015979">
    <property type="term" value="P:photosynthesis"/>
    <property type="evidence" value="ECO:0007669"/>
    <property type="project" value="UniProtKB-UniRule"/>
</dbReference>
<dbReference type="FunFam" id="1.20.1130.10:FF:000001">
    <property type="entry name" value="Photosystem I P700 chlorophyll a apoprotein A2"/>
    <property type="match status" value="1"/>
</dbReference>
<dbReference type="Gene3D" id="1.20.1130.10">
    <property type="entry name" value="Photosystem I PsaA/PsaB"/>
    <property type="match status" value="1"/>
</dbReference>
<dbReference type="HAMAP" id="MF_00458">
    <property type="entry name" value="PSI_PsaA"/>
    <property type="match status" value="1"/>
</dbReference>
<dbReference type="InterPro" id="IPR006243">
    <property type="entry name" value="PSI_PsaA"/>
</dbReference>
<dbReference type="InterPro" id="IPR001280">
    <property type="entry name" value="PSI_PsaA/B"/>
</dbReference>
<dbReference type="InterPro" id="IPR020586">
    <property type="entry name" value="PSI_PsaA/B_CS"/>
</dbReference>
<dbReference type="InterPro" id="IPR036408">
    <property type="entry name" value="PSI_PsaA/B_sf"/>
</dbReference>
<dbReference type="NCBIfam" id="TIGR01335">
    <property type="entry name" value="psaA"/>
    <property type="match status" value="1"/>
</dbReference>
<dbReference type="PANTHER" id="PTHR30128">
    <property type="entry name" value="OUTER MEMBRANE PROTEIN, OMPA-RELATED"/>
    <property type="match status" value="1"/>
</dbReference>
<dbReference type="PANTHER" id="PTHR30128:SF19">
    <property type="entry name" value="PHOTOSYSTEM I P700 CHLOROPHYLL A APOPROTEIN A1-RELATED"/>
    <property type="match status" value="1"/>
</dbReference>
<dbReference type="Pfam" id="PF00223">
    <property type="entry name" value="PsaA_PsaB"/>
    <property type="match status" value="1"/>
</dbReference>
<dbReference type="PIRSF" id="PIRSF002905">
    <property type="entry name" value="PSI_A"/>
    <property type="match status" value="1"/>
</dbReference>
<dbReference type="PRINTS" id="PR00257">
    <property type="entry name" value="PHOTSYSPSAAB"/>
</dbReference>
<dbReference type="SUPFAM" id="SSF81558">
    <property type="entry name" value="Photosystem I subunits PsaA/PsaB"/>
    <property type="match status" value="1"/>
</dbReference>
<dbReference type="PROSITE" id="PS00419">
    <property type="entry name" value="PHOTOSYSTEM_I_PSAAB"/>
    <property type="match status" value="1"/>
</dbReference>
<sequence>MIIRSPKPEVKIVVERDPVKTSFEKWAKPGHFSKTLAKGPDTTTWIWNLHADAHDFDSHTKDLEEISRKVFSAHFGQLAIIFIWLSGMYFHGARFSNYEAWLADPTHIKPSAQVVWPIVGQEILNGDVGGGFRGIQITSGFFQLWRASGITSELQLYCTAIGALIFAALMLFAGWFHYHKAAPELAWFQDVESMLNHHLAGLLGLGSLSWAGHQIHVSLPINQLLDAGVDPKEIPLPHEFILNRDLLAQLYPSFAKGLTPFFTLNWSEYSDFLTFRGGLNPVTGGLWLTDTAHHHLAIAVLFLIAGHMYKTNWRIGHNLKDILEAHKGPFTGEGHKGLYEILTTSWHAQLAINLAMLGSLTIIVAHHMYSMPPYPYLAIDYGTQLSLFTHHMWIGGFIIVGAAAHAAIFMVRDYDPTTQYNNLLDRVLRHRDAIVSHLNWVCIFLGFHSFGLYIHNDTMSALGRPQDMFSDTAIQLQPIFAQWIQNTHASAPGSTAPGATASTSLTWGGGDLVTVGSKVALLPIPLGTADFLVHHIHAFTIHVTVLILLKGVLFARSSRLIPDKANLGFRFPCDGPGRGGTCQVSAWDHVFLGLFWMYNAISVVIFHFSWKMQSDVWGSISDQGVVTHITGGNFAQSSITINGWLRDFLWAQASQVIQSYGSSLSAYGLLFLGAHFVWAFSLMFLFSGRGYWQELIESIVWAHNKLKVAPAIQPRALSIVQGRAVGVAHYLLGGIVTTWAFFLARIIAVG</sequence>
<gene>
    <name evidence="1" type="primary">psaA</name>
</gene>